<feature type="chain" id="PRO_0000307603" description="Triosephosphate isomerase">
    <location>
        <begin position="1"/>
        <end position="255"/>
    </location>
</feature>
<feature type="active site" description="Electrophile" evidence="1">
    <location>
        <position position="95"/>
    </location>
</feature>
<feature type="active site" description="Proton acceptor" evidence="1">
    <location>
        <position position="167"/>
    </location>
</feature>
<feature type="binding site" evidence="1">
    <location>
        <begin position="9"/>
        <end position="11"/>
    </location>
    <ligand>
        <name>substrate</name>
    </ligand>
</feature>
<feature type="binding site" evidence="1">
    <location>
        <position position="173"/>
    </location>
    <ligand>
        <name>substrate</name>
    </ligand>
</feature>
<feature type="binding site" evidence="1">
    <location>
        <position position="212"/>
    </location>
    <ligand>
        <name>substrate</name>
    </ligand>
</feature>
<feature type="binding site" evidence="1">
    <location>
        <begin position="233"/>
        <end position="234"/>
    </location>
    <ligand>
        <name>substrate</name>
    </ligand>
</feature>
<name>TPIS_YERPS</name>
<accession>Q66GA1</accession>
<reference key="1">
    <citation type="journal article" date="2004" name="Proc. Natl. Acad. Sci. U.S.A.">
        <title>Insights into the evolution of Yersinia pestis through whole-genome comparison with Yersinia pseudotuberculosis.</title>
        <authorList>
            <person name="Chain P.S.G."/>
            <person name="Carniel E."/>
            <person name="Larimer F.W."/>
            <person name="Lamerdin J."/>
            <person name="Stoutland P.O."/>
            <person name="Regala W.M."/>
            <person name="Georgescu A.M."/>
            <person name="Vergez L.M."/>
            <person name="Land M.L."/>
            <person name="Motin V.L."/>
            <person name="Brubaker R.R."/>
            <person name="Fowler J."/>
            <person name="Hinnebusch J."/>
            <person name="Marceau M."/>
            <person name="Medigue C."/>
            <person name="Simonet M."/>
            <person name="Chenal-Francisque V."/>
            <person name="Souza B."/>
            <person name="Dacheux D."/>
            <person name="Elliott J.M."/>
            <person name="Derbise A."/>
            <person name="Hauser L.J."/>
            <person name="Garcia E."/>
        </authorList>
    </citation>
    <scope>NUCLEOTIDE SEQUENCE [LARGE SCALE GENOMIC DNA]</scope>
    <source>
        <strain>IP32953</strain>
    </source>
</reference>
<dbReference type="EC" id="5.3.1.1" evidence="1"/>
<dbReference type="EMBL" id="BX936398">
    <property type="protein sequence ID" value="CAH19321.1"/>
    <property type="molecule type" value="Genomic_DNA"/>
</dbReference>
<dbReference type="RefSeq" id="WP_002208959.1">
    <property type="nucleotide sequence ID" value="NZ_CP009712.1"/>
</dbReference>
<dbReference type="SMR" id="Q66GA1"/>
<dbReference type="GeneID" id="57974507"/>
<dbReference type="KEGG" id="ypo:BZ17_2514"/>
<dbReference type="KEGG" id="yps:YPTB0081"/>
<dbReference type="PATRIC" id="fig|273123.14.peg.2637"/>
<dbReference type="UniPathway" id="UPA00109">
    <property type="reaction ID" value="UER00189"/>
</dbReference>
<dbReference type="UniPathway" id="UPA00138"/>
<dbReference type="Proteomes" id="UP000001011">
    <property type="component" value="Chromosome"/>
</dbReference>
<dbReference type="GO" id="GO:0005829">
    <property type="term" value="C:cytosol"/>
    <property type="evidence" value="ECO:0007669"/>
    <property type="project" value="TreeGrafter"/>
</dbReference>
<dbReference type="GO" id="GO:0004807">
    <property type="term" value="F:triose-phosphate isomerase activity"/>
    <property type="evidence" value="ECO:0007669"/>
    <property type="project" value="UniProtKB-UniRule"/>
</dbReference>
<dbReference type="GO" id="GO:0006094">
    <property type="term" value="P:gluconeogenesis"/>
    <property type="evidence" value="ECO:0007669"/>
    <property type="project" value="UniProtKB-UniRule"/>
</dbReference>
<dbReference type="GO" id="GO:0046166">
    <property type="term" value="P:glyceraldehyde-3-phosphate biosynthetic process"/>
    <property type="evidence" value="ECO:0007669"/>
    <property type="project" value="TreeGrafter"/>
</dbReference>
<dbReference type="GO" id="GO:0019563">
    <property type="term" value="P:glycerol catabolic process"/>
    <property type="evidence" value="ECO:0007669"/>
    <property type="project" value="TreeGrafter"/>
</dbReference>
<dbReference type="GO" id="GO:0006096">
    <property type="term" value="P:glycolytic process"/>
    <property type="evidence" value="ECO:0007669"/>
    <property type="project" value="UniProtKB-UniRule"/>
</dbReference>
<dbReference type="CDD" id="cd00311">
    <property type="entry name" value="TIM"/>
    <property type="match status" value="1"/>
</dbReference>
<dbReference type="FunFam" id="3.20.20.70:FF:000020">
    <property type="entry name" value="Triosephosphate isomerase"/>
    <property type="match status" value="1"/>
</dbReference>
<dbReference type="Gene3D" id="3.20.20.70">
    <property type="entry name" value="Aldolase class I"/>
    <property type="match status" value="1"/>
</dbReference>
<dbReference type="HAMAP" id="MF_00147_B">
    <property type="entry name" value="TIM_B"/>
    <property type="match status" value="1"/>
</dbReference>
<dbReference type="InterPro" id="IPR013785">
    <property type="entry name" value="Aldolase_TIM"/>
</dbReference>
<dbReference type="InterPro" id="IPR035990">
    <property type="entry name" value="TIM_sf"/>
</dbReference>
<dbReference type="InterPro" id="IPR022896">
    <property type="entry name" value="TrioseP_Isoase_bac/euk"/>
</dbReference>
<dbReference type="InterPro" id="IPR000652">
    <property type="entry name" value="Triosephosphate_isomerase"/>
</dbReference>
<dbReference type="InterPro" id="IPR020861">
    <property type="entry name" value="Triosephosphate_isomerase_AS"/>
</dbReference>
<dbReference type="NCBIfam" id="TIGR00419">
    <property type="entry name" value="tim"/>
    <property type="match status" value="1"/>
</dbReference>
<dbReference type="PANTHER" id="PTHR21139">
    <property type="entry name" value="TRIOSEPHOSPHATE ISOMERASE"/>
    <property type="match status" value="1"/>
</dbReference>
<dbReference type="PANTHER" id="PTHR21139:SF42">
    <property type="entry name" value="TRIOSEPHOSPHATE ISOMERASE"/>
    <property type="match status" value="1"/>
</dbReference>
<dbReference type="Pfam" id="PF00121">
    <property type="entry name" value="TIM"/>
    <property type="match status" value="1"/>
</dbReference>
<dbReference type="SUPFAM" id="SSF51351">
    <property type="entry name" value="Triosephosphate isomerase (TIM)"/>
    <property type="match status" value="1"/>
</dbReference>
<dbReference type="PROSITE" id="PS00171">
    <property type="entry name" value="TIM_1"/>
    <property type="match status" value="1"/>
</dbReference>
<dbReference type="PROSITE" id="PS51440">
    <property type="entry name" value="TIM_2"/>
    <property type="match status" value="1"/>
</dbReference>
<sequence length="255" mass="26794">MRHPLVMGNWKLNGSTHMVNELIAGLRKELSTVDGCGVAIAPPAIYLNQAKHELAGSRIALGAQNVDVNLSGAFTGETSAEMLKDIGAQYIIIGHSERRTYHQESDELIAKKFGVLKEIGLIPVLCIGESEAENEAGQTEAVCAKQLDAVLNTLGVKAFEGAVIAYEPIWAIGTGKSATPAQAQAVHKFIRDHIAKQDAAVAAQVIIQYGGSVNDKNAAELFTQPDIDGALVGGASLKADAFAVIVKAAAKAKKA</sequence>
<evidence type="ECO:0000255" key="1">
    <source>
        <dbReference type="HAMAP-Rule" id="MF_00147"/>
    </source>
</evidence>
<gene>
    <name evidence="1" type="primary">tpiA</name>
    <name type="ordered locus">YPTB0081</name>
</gene>
<protein>
    <recommendedName>
        <fullName evidence="1">Triosephosphate isomerase</fullName>
        <shortName evidence="1">TIM</shortName>
        <shortName evidence="1">TPI</shortName>
        <ecNumber evidence="1">5.3.1.1</ecNumber>
    </recommendedName>
    <alternativeName>
        <fullName evidence="1">Triose-phosphate isomerase</fullName>
    </alternativeName>
</protein>
<organism>
    <name type="scientific">Yersinia pseudotuberculosis serotype I (strain IP32953)</name>
    <dbReference type="NCBI Taxonomy" id="273123"/>
    <lineage>
        <taxon>Bacteria</taxon>
        <taxon>Pseudomonadati</taxon>
        <taxon>Pseudomonadota</taxon>
        <taxon>Gammaproteobacteria</taxon>
        <taxon>Enterobacterales</taxon>
        <taxon>Yersiniaceae</taxon>
        <taxon>Yersinia</taxon>
    </lineage>
</organism>
<keyword id="KW-0963">Cytoplasm</keyword>
<keyword id="KW-0312">Gluconeogenesis</keyword>
<keyword id="KW-0324">Glycolysis</keyword>
<keyword id="KW-0413">Isomerase</keyword>
<proteinExistence type="inferred from homology"/>
<comment type="function">
    <text evidence="1">Involved in the gluconeogenesis. Catalyzes stereospecifically the conversion of dihydroxyacetone phosphate (DHAP) to D-glyceraldehyde-3-phosphate (G3P).</text>
</comment>
<comment type="catalytic activity">
    <reaction evidence="1">
        <text>D-glyceraldehyde 3-phosphate = dihydroxyacetone phosphate</text>
        <dbReference type="Rhea" id="RHEA:18585"/>
        <dbReference type="ChEBI" id="CHEBI:57642"/>
        <dbReference type="ChEBI" id="CHEBI:59776"/>
        <dbReference type="EC" id="5.3.1.1"/>
    </reaction>
</comment>
<comment type="pathway">
    <text evidence="1">Carbohydrate biosynthesis; gluconeogenesis.</text>
</comment>
<comment type="pathway">
    <text evidence="1">Carbohydrate degradation; glycolysis; D-glyceraldehyde 3-phosphate from glycerone phosphate: step 1/1.</text>
</comment>
<comment type="subunit">
    <text evidence="1">Homodimer.</text>
</comment>
<comment type="subcellular location">
    <subcellularLocation>
        <location evidence="1">Cytoplasm</location>
    </subcellularLocation>
</comment>
<comment type="similarity">
    <text evidence="1">Belongs to the triosephosphate isomerase family.</text>
</comment>